<sequence length="214" mass="24894">MDLHFENIRREYDKRSLSASDLTPTPFDLVTRWLQDAVEAKTYEPTAVIVGTATPDGHPSTRTVLLKEFLNNEFIFYSNYESRKGQQMAANPHVCLTFLWHELERQIHVEGDVRILEPELSDAYFATRPYKSRVGARISPQSRPIPGRSFIVQEFMKESLKYAGRTVPRPDTWGGFAVKPVRIEFWQGRESRLHDRFLYELRPDASWSVHRLAP</sequence>
<accession>B2RHS7</accession>
<proteinExistence type="inferred from homology"/>
<name>PDXH_PORG3</name>
<organism>
    <name type="scientific">Porphyromonas gingivalis (strain ATCC 33277 / DSM 20709 / CIP 103683 / JCM 12257 / NCTC 11834 / 2561)</name>
    <dbReference type="NCBI Taxonomy" id="431947"/>
    <lineage>
        <taxon>Bacteria</taxon>
        <taxon>Pseudomonadati</taxon>
        <taxon>Bacteroidota</taxon>
        <taxon>Bacteroidia</taxon>
        <taxon>Bacteroidales</taxon>
        <taxon>Porphyromonadaceae</taxon>
        <taxon>Porphyromonas</taxon>
    </lineage>
</organism>
<dbReference type="EC" id="1.4.3.5" evidence="1"/>
<dbReference type="EMBL" id="AP009380">
    <property type="protein sequence ID" value="BAG32922.1"/>
    <property type="molecule type" value="Genomic_DNA"/>
</dbReference>
<dbReference type="RefSeq" id="WP_004583944.1">
    <property type="nucleotide sequence ID" value="NZ_CP025930.1"/>
</dbReference>
<dbReference type="SMR" id="B2RHS7"/>
<dbReference type="GeneID" id="29255642"/>
<dbReference type="KEGG" id="pgn:PGN_0403"/>
<dbReference type="eggNOG" id="COG0259">
    <property type="taxonomic scope" value="Bacteria"/>
</dbReference>
<dbReference type="HOGENOM" id="CLU_032263_2_2_10"/>
<dbReference type="OrthoDB" id="9780392at2"/>
<dbReference type="BioCyc" id="PGIN431947:G1G2V-443-MONOMER"/>
<dbReference type="UniPathway" id="UPA01068">
    <property type="reaction ID" value="UER00304"/>
</dbReference>
<dbReference type="UniPathway" id="UPA01068">
    <property type="reaction ID" value="UER00305"/>
</dbReference>
<dbReference type="Proteomes" id="UP000008842">
    <property type="component" value="Chromosome"/>
</dbReference>
<dbReference type="GO" id="GO:0010181">
    <property type="term" value="F:FMN binding"/>
    <property type="evidence" value="ECO:0007669"/>
    <property type="project" value="UniProtKB-UniRule"/>
</dbReference>
<dbReference type="GO" id="GO:0004733">
    <property type="term" value="F:pyridoxamine phosphate oxidase activity"/>
    <property type="evidence" value="ECO:0007669"/>
    <property type="project" value="UniProtKB-UniRule"/>
</dbReference>
<dbReference type="GO" id="GO:0008615">
    <property type="term" value="P:pyridoxine biosynthetic process"/>
    <property type="evidence" value="ECO:0007669"/>
    <property type="project" value="UniProtKB-KW"/>
</dbReference>
<dbReference type="Gene3D" id="2.30.110.10">
    <property type="entry name" value="Electron Transport, Fmn-binding Protein, Chain A"/>
    <property type="match status" value="1"/>
</dbReference>
<dbReference type="HAMAP" id="MF_01629">
    <property type="entry name" value="PdxH"/>
    <property type="match status" value="1"/>
</dbReference>
<dbReference type="InterPro" id="IPR000659">
    <property type="entry name" value="Pyridox_Oxase"/>
</dbReference>
<dbReference type="InterPro" id="IPR019740">
    <property type="entry name" value="Pyridox_Oxase_CS"/>
</dbReference>
<dbReference type="InterPro" id="IPR011576">
    <property type="entry name" value="Pyridox_Oxase_N"/>
</dbReference>
<dbReference type="InterPro" id="IPR019576">
    <property type="entry name" value="Pyridoxamine_oxidase_dimer_C"/>
</dbReference>
<dbReference type="InterPro" id="IPR012349">
    <property type="entry name" value="Split_barrel_FMN-bd"/>
</dbReference>
<dbReference type="NCBIfam" id="TIGR00558">
    <property type="entry name" value="pdxH"/>
    <property type="match status" value="1"/>
</dbReference>
<dbReference type="NCBIfam" id="NF004231">
    <property type="entry name" value="PRK05679.1"/>
    <property type="match status" value="1"/>
</dbReference>
<dbReference type="PANTHER" id="PTHR10851:SF0">
    <property type="entry name" value="PYRIDOXINE-5'-PHOSPHATE OXIDASE"/>
    <property type="match status" value="1"/>
</dbReference>
<dbReference type="PANTHER" id="PTHR10851">
    <property type="entry name" value="PYRIDOXINE-5-PHOSPHATE OXIDASE"/>
    <property type="match status" value="1"/>
</dbReference>
<dbReference type="Pfam" id="PF10590">
    <property type="entry name" value="PNP_phzG_C"/>
    <property type="match status" value="1"/>
</dbReference>
<dbReference type="Pfam" id="PF01243">
    <property type="entry name" value="PNPOx_N"/>
    <property type="match status" value="1"/>
</dbReference>
<dbReference type="PIRSF" id="PIRSF000190">
    <property type="entry name" value="Pyd_amn-ph_oxd"/>
    <property type="match status" value="1"/>
</dbReference>
<dbReference type="SUPFAM" id="SSF50475">
    <property type="entry name" value="FMN-binding split barrel"/>
    <property type="match status" value="1"/>
</dbReference>
<dbReference type="PROSITE" id="PS01064">
    <property type="entry name" value="PYRIDOX_OXIDASE"/>
    <property type="match status" value="1"/>
</dbReference>
<protein>
    <recommendedName>
        <fullName evidence="1">Pyridoxine/pyridoxamine 5'-phosphate oxidase</fullName>
        <ecNumber evidence="1">1.4.3.5</ecNumber>
    </recommendedName>
    <alternativeName>
        <fullName evidence="1">PNP/PMP oxidase</fullName>
        <shortName evidence="1">PNPOx</shortName>
    </alternativeName>
    <alternativeName>
        <fullName evidence="1">Pyridoxal 5'-phosphate synthase</fullName>
    </alternativeName>
</protein>
<keyword id="KW-0285">Flavoprotein</keyword>
<keyword id="KW-0288">FMN</keyword>
<keyword id="KW-0560">Oxidoreductase</keyword>
<keyword id="KW-0664">Pyridoxine biosynthesis</keyword>
<feature type="chain" id="PRO_1000186323" description="Pyridoxine/pyridoxamine 5'-phosphate oxidase">
    <location>
        <begin position="1"/>
        <end position="214"/>
    </location>
</feature>
<feature type="binding site" evidence="1">
    <location>
        <begin position="9"/>
        <end position="12"/>
    </location>
    <ligand>
        <name>substrate</name>
    </ligand>
</feature>
<feature type="binding site" evidence="1">
    <location>
        <begin position="62"/>
        <end position="67"/>
    </location>
    <ligand>
        <name>FMN</name>
        <dbReference type="ChEBI" id="CHEBI:58210"/>
    </ligand>
</feature>
<feature type="binding site" evidence="1">
    <location>
        <position position="67"/>
    </location>
    <ligand>
        <name>substrate</name>
    </ligand>
</feature>
<feature type="binding site" evidence="1">
    <location>
        <begin position="77"/>
        <end position="78"/>
    </location>
    <ligand>
        <name>FMN</name>
        <dbReference type="ChEBI" id="CHEBI:58210"/>
    </ligand>
</feature>
<feature type="binding site" evidence="1">
    <location>
        <position position="83"/>
    </location>
    <ligand>
        <name>FMN</name>
        <dbReference type="ChEBI" id="CHEBI:58210"/>
    </ligand>
</feature>
<feature type="binding site" evidence="1">
    <location>
        <position position="84"/>
    </location>
    <ligand>
        <name>FMN</name>
        <dbReference type="ChEBI" id="CHEBI:58210"/>
    </ligand>
</feature>
<feature type="binding site" evidence="1">
    <location>
        <position position="106"/>
    </location>
    <ligand>
        <name>FMN</name>
        <dbReference type="ChEBI" id="CHEBI:58210"/>
    </ligand>
</feature>
<feature type="binding site" evidence="1">
    <location>
        <position position="124"/>
    </location>
    <ligand>
        <name>substrate</name>
    </ligand>
</feature>
<feature type="binding site" evidence="1">
    <location>
        <position position="128"/>
    </location>
    <ligand>
        <name>substrate</name>
    </ligand>
</feature>
<feature type="binding site" evidence="1">
    <location>
        <position position="132"/>
    </location>
    <ligand>
        <name>substrate</name>
    </ligand>
</feature>
<feature type="binding site" evidence="1">
    <location>
        <begin position="141"/>
        <end position="142"/>
    </location>
    <ligand>
        <name>FMN</name>
        <dbReference type="ChEBI" id="CHEBI:58210"/>
    </ligand>
</feature>
<feature type="binding site" evidence="1">
    <location>
        <position position="186"/>
    </location>
    <ligand>
        <name>FMN</name>
        <dbReference type="ChEBI" id="CHEBI:58210"/>
    </ligand>
</feature>
<feature type="binding site" evidence="1">
    <location>
        <begin position="192"/>
        <end position="194"/>
    </location>
    <ligand>
        <name>substrate</name>
    </ligand>
</feature>
<feature type="binding site" evidence="1">
    <location>
        <position position="196"/>
    </location>
    <ligand>
        <name>FMN</name>
        <dbReference type="ChEBI" id="CHEBI:58210"/>
    </ligand>
</feature>
<gene>
    <name evidence="1" type="primary">pdxH</name>
    <name type="ordered locus">PGN_0403</name>
</gene>
<reference key="1">
    <citation type="journal article" date="2008" name="DNA Res.">
        <title>Determination of the genome sequence of Porphyromonas gingivalis strain ATCC 33277 and genomic comparison with strain W83 revealed extensive genome rearrangements in P. gingivalis.</title>
        <authorList>
            <person name="Naito M."/>
            <person name="Hirakawa H."/>
            <person name="Yamashita A."/>
            <person name="Ohara N."/>
            <person name="Shoji M."/>
            <person name="Yukitake H."/>
            <person name="Nakayama K."/>
            <person name="Toh H."/>
            <person name="Yoshimura F."/>
            <person name="Kuhara S."/>
            <person name="Hattori M."/>
            <person name="Hayashi T."/>
            <person name="Nakayama K."/>
        </authorList>
    </citation>
    <scope>NUCLEOTIDE SEQUENCE [LARGE SCALE GENOMIC DNA]</scope>
    <source>
        <strain>ATCC 33277 / DSM 20709 / CIP 103683 / JCM 12257 / NCTC 11834 / 2561</strain>
    </source>
</reference>
<evidence type="ECO:0000255" key="1">
    <source>
        <dbReference type="HAMAP-Rule" id="MF_01629"/>
    </source>
</evidence>
<comment type="function">
    <text evidence="1">Catalyzes the oxidation of either pyridoxine 5'-phosphate (PNP) or pyridoxamine 5'-phosphate (PMP) into pyridoxal 5'-phosphate (PLP).</text>
</comment>
<comment type="catalytic activity">
    <reaction evidence="1">
        <text>pyridoxamine 5'-phosphate + O2 + H2O = pyridoxal 5'-phosphate + H2O2 + NH4(+)</text>
        <dbReference type="Rhea" id="RHEA:15817"/>
        <dbReference type="ChEBI" id="CHEBI:15377"/>
        <dbReference type="ChEBI" id="CHEBI:15379"/>
        <dbReference type="ChEBI" id="CHEBI:16240"/>
        <dbReference type="ChEBI" id="CHEBI:28938"/>
        <dbReference type="ChEBI" id="CHEBI:58451"/>
        <dbReference type="ChEBI" id="CHEBI:597326"/>
        <dbReference type="EC" id="1.4.3.5"/>
    </reaction>
</comment>
<comment type="catalytic activity">
    <reaction evidence="1">
        <text>pyridoxine 5'-phosphate + O2 = pyridoxal 5'-phosphate + H2O2</text>
        <dbReference type="Rhea" id="RHEA:15149"/>
        <dbReference type="ChEBI" id="CHEBI:15379"/>
        <dbReference type="ChEBI" id="CHEBI:16240"/>
        <dbReference type="ChEBI" id="CHEBI:58589"/>
        <dbReference type="ChEBI" id="CHEBI:597326"/>
        <dbReference type="EC" id="1.4.3.5"/>
    </reaction>
</comment>
<comment type="cofactor">
    <cofactor evidence="1">
        <name>FMN</name>
        <dbReference type="ChEBI" id="CHEBI:58210"/>
    </cofactor>
    <text evidence="1">Binds 1 FMN per subunit.</text>
</comment>
<comment type="pathway">
    <text evidence="1">Cofactor metabolism; pyridoxal 5'-phosphate salvage; pyridoxal 5'-phosphate from pyridoxamine 5'-phosphate: step 1/1.</text>
</comment>
<comment type="pathway">
    <text evidence="1">Cofactor metabolism; pyridoxal 5'-phosphate salvage; pyridoxal 5'-phosphate from pyridoxine 5'-phosphate: step 1/1.</text>
</comment>
<comment type="subunit">
    <text evidence="1">Homodimer.</text>
</comment>
<comment type="similarity">
    <text evidence="1">Belongs to the pyridoxamine 5'-phosphate oxidase family.</text>
</comment>